<proteinExistence type="inferred from homology"/>
<name>RBFA_ACIB5</name>
<organism>
    <name type="scientific">Acinetobacter baumannii (strain AB0057)</name>
    <dbReference type="NCBI Taxonomy" id="480119"/>
    <lineage>
        <taxon>Bacteria</taxon>
        <taxon>Pseudomonadati</taxon>
        <taxon>Pseudomonadota</taxon>
        <taxon>Gammaproteobacteria</taxon>
        <taxon>Moraxellales</taxon>
        <taxon>Moraxellaceae</taxon>
        <taxon>Acinetobacter</taxon>
        <taxon>Acinetobacter calcoaceticus/baumannii complex</taxon>
    </lineage>
</organism>
<gene>
    <name evidence="1" type="primary">rbfA</name>
    <name type="ordered locus">AB57_0416</name>
</gene>
<dbReference type="EMBL" id="CP001182">
    <property type="protein sequence ID" value="ACJ39842.1"/>
    <property type="molecule type" value="Genomic_DNA"/>
</dbReference>
<dbReference type="RefSeq" id="WP_000897046.1">
    <property type="nucleotide sequence ID" value="NC_011586.2"/>
</dbReference>
<dbReference type="SMR" id="B7I3S0"/>
<dbReference type="KEGG" id="abn:AB57_0416"/>
<dbReference type="HOGENOM" id="CLU_089475_5_0_6"/>
<dbReference type="Proteomes" id="UP000007094">
    <property type="component" value="Chromosome"/>
</dbReference>
<dbReference type="GO" id="GO:0005829">
    <property type="term" value="C:cytosol"/>
    <property type="evidence" value="ECO:0007669"/>
    <property type="project" value="TreeGrafter"/>
</dbReference>
<dbReference type="GO" id="GO:0043024">
    <property type="term" value="F:ribosomal small subunit binding"/>
    <property type="evidence" value="ECO:0007669"/>
    <property type="project" value="TreeGrafter"/>
</dbReference>
<dbReference type="GO" id="GO:0030490">
    <property type="term" value="P:maturation of SSU-rRNA"/>
    <property type="evidence" value="ECO:0007669"/>
    <property type="project" value="UniProtKB-UniRule"/>
</dbReference>
<dbReference type="Gene3D" id="3.30.300.20">
    <property type="match status" value="1"/>
</dbReference>
<dbReference type="HAMAP" id="MF_00003">
    <property type="entry name" value="RbfA"/>
    <property type="match status" value="1"/>
</dbReference>
<dbReference type="InterPro" id="IPR015946">
    <property type="entry name" value="KH_dom-like_a/b"/>
</dbReference>
<dbReference type="InterPro" id="IPR000238">
    <property type="entry name" value="RbfA"/>
</dbReference>
<dbReference type="InterPro" id="IPR023799">
    <property type="entry name" value="RbfA_dom_sf"/>
</dbReference>
<dbReference type="NCBIfam" id="NF010389">
    <property type="entry name" value="PRK13816.1"/>
    <property type="match status" value="1"/>
</dbReference>
<dbReference type="NCBIfam" id="TIGR00082">
    <property type="entry name" value="rbfA"/>
    <property type="match status" value="1"/>
</dbReference>
<dbReference type="PANTHER" id="PTHR33515">
    <property type="entry name" value="RIBOSOME-BINDING FACTOR A, CHLOROPLASTIC-RELATED"/>
    <property type="match status" value="1"/>
</dbReference>
<dbReference type="PANTHER" id="PTHR33515:SF1">
    <property type="entry name" value="RIBOSOME-BINDING FACTOR A, CHLOROPLASTIC-RELATED"/>
    <property type="match status" value="1"/>
</dbReference>
<dbReference type="Pfam" id="PF02033">
    <property type="entry name" value="RBFA"/>
    <property type="match status" value="1"/>
</dbReference>
<dbReference type="SUPFAM" id="SSF89919">
    <property type="entry name" value="Ribosome-binding factor A, RbfA"/>
    <property type="match status" value="1"/>
</dbReference>
<accession>B7I3S0</accession>
<reference key="1">
    <citation type="journal article" date="2008" name="J. Bacteriol.">
        <title>Comparative genome sequence analysis of multidrug-resistant Acinetobacter baumannii.</title>
        <authorList>
            <person name="Adams M.D."/>
            <person name="Goglin K."/>
            <person name="Molyneaux N."/>
            <person name="Hujer K.M."/>
            <person name="Lavender H."/>
            <person name="Jamison J.J."/>
            <person name="MacDonald I.J."/>
            <person name="Martin K.M."/>
            <person name="Russo T."/>
            <person name="Campagnari A.A."/>
            <person name="Hujer A.M."/>
            <person name="Bonomo R.A."/>
            <person name="Gill S.R."/>
        </authorList>
    </citation>
    <scope>NUCLEOTIDE SEQUENCE [LARGE SCALE GENOMIC DNA]</scope>
    <source>
        <strain>AB0057</strain>
    </source>
</reference>
<feature type="chain" id="PRO_1000193218" description="Ribosome-binding factor A">
    <location>
        <begin position="1"/>
        <end position="133"/>
    </location>
</feature>
<evidence type="ECO:0000255" key="1">
    <source>
        <dbReference type="HAMAP-Rule" id="MF_00003"/>
    </source>
</evidence>
<protein>
    <recommendedName>
        <fullName evidence="1">Ribosome-binding factor A</fullName>
    </recommendedName>
</protein>
<comment type="function">
    <text evidence="1">One of several proteins that assist in the late maturation steps of the functional core of the 30S ribosomal subunit. Associates with free 30S ribosomal subunits (but not with 30S subunits that are part of 70S ribosomes or polysomes). Required for efficient processing of 16S rRNA. May interact with the 5'-terminal helix region of 16S rRNA.</text>
</comment>
<comment type="subunit">
    <text evidence="1">Monomer. Binds 30S ribosomal subunits, but not 50S ribosomal subunits or 70S ribosomes.</text>
</comment>
<comment type="subcellular location">
    <subcellularLocation>
        <location evidence="1">Cytoplasm</location>
    </subcellularLocation>
</comment>
<comment type="similarity">
    <text evidence="1">Belongs to the RbfA family.</text>
</comment>
<keyword id="KW-0963">Cytoplasm</keyword>
<keyword id="KW-0690">Ribosome biogenesis</keyword>
<sequence>MAGGQRLKRMADSVQRELSELIRQELKDPRLGGLVTISGVKVSPDLGYADVYVTVMGRELSDDQNEVAHRETLDILNKASGFLRQELSRRIKTRITPRLRFHYDKTNAYGNYMFGLIEKAVQDLPKRESDDEE</sequence>